<dbReference type="EC" id="2.3.1.263" evidence="3"/>
<dbReference type="EMBL" id="FP565809">
    <property type="protein sequence ID" value="CBH21412.1"/>
    <property type="molecule type" value="Genomic_DNA"/>
</dbReference>
<dbReference type="SMR" id="E3PY97"/>
<dbReference type="STRING" id="1511.CLOST_1292"/>
<dbReference type="KEGG" id="cst:CLOST_1292"/>
<dbReference type="eggNOG" id="COG0031">
    <property type="taxonomic scope" value="Bacteria"/>
</dbReference>
<dbReference type="HOGENOM" id="CLU_577286_0_0_9"/>
<dbReference type="Proteomes" id="UP000007041">
    <property type="component" value="Chromosome"/>
</dbReference>
<dbReference type="GO" id="GO:0016740">
    <property type="term" value="F:transferase activity"/>
    <property type="evidence" value="ECO:0007669"/>
    <property type="project" value="UniProtKB-KW"/>
</dbReference>
<dbReference type="GO" id="GO:0006591">
    <property type="term" value="P:ornithine metabolic process"/>
    <property type="evidence" value="ECO:0000314"/>
    <property type="project" value="UniProtKB"/>
</dbReference>
<dbReference type="CDD" id="cd00640">
    <property type="entry name" value="Trp-synth-beta_II"/>
    <property type="match status" value="1"/>
</dbReference>
<dbReference type="FunFam" id="3.40.50.1100:FF:000051">
    <property type="entry name" value="2-amino-4-ketopentanoate thiolase beta subunit"/>
    <property type="match status" value="1"/>
</dbReference>
<dbReference type="Gene3D" id="3.40.50.1100">
    <property type="match status" value="2"/>
</dbReference>
<dbReference type="InterPro" id="IPR053471">
    <property type="entry name" value="AKP_thiolase_beta"/>
</dbReference>
<dbReference type="InterPro" id="IPR050214">
    <property type="entry name" value="Cys_Synth/Cystath_Beta-Synth"/>
</dbReference>
<dbReference type="InterPro" id="IPR001926">
    <property type="entry name" value="TrpB-like_PALP"/>
</dbReference>
<dbReference type="InterPro" id="IPR036052">
    <property type="entry name" value="TrpB-like_PALP_sf"/>
</dbReference>
<dbReference type="NCBIfam" id="NF040741">
    <property type="entry name" value="ornith_OrtB"/>
    <property type="match status" value="1"/>
</dbReference>
<dbReference type="PANTHER" id="PTHR10314">
    <property type="entry name" value="CYSTATHIONINE BETA-SYNTHASE"/>
    <property type="match status" value="1"/>
</dbReference>
<dbReference type="Pfam" id="PF00291">
    <property type="entry name" value="PALP"/>
    <property type="match status" value="1"/>
</dbReference>
<dbReference type="SUPFAM" id="SSF53686">
    <property type="entry name" value="Tryptophan synthase beta subunit-like PLP-dependent enzymes"/>
    <property type="match status" value="1"/>
</dbReference>
<feature type="chain" id="PRO_0000438121" description="2-amino-4-ketopentanoate thiolase beta subunit">
    <location>
        <begin position="1"/>
        <end position="469"/>
    </location>
</feature>
<feature type="binding site" evidence="2">
    <location>
        <position position="128"/>
    </location>
    <ligand>
        <name>pyridoxal 5'-phosphate</name>
        <dbReference type="ChEBI" id="CHEBI:597326"/>
    </ligand>
</feature>
<feature type="binding site" evidence="2">
    <location>
        <begin position="238"/>
        <end position="242"/>
    </location>
    <ligand>
        <name>pyridoxal 5'-phosphate</name>
        <dbReference type="ChEBI" id="CHEBI:597326"/>
    </ligand>
</feature>
<feature type="modified residue" description="N6-(pyridoxal phosphate)lysine" evidence="2">
    <location>
        <position position="102"/>
    </location>
</feature>
<sequence length="469" mass="50869">MSKDMSYSGVMSRRNEIMKNAIGIDYTTFESGSLSFDYEKMMRETGYTLEEMQKIQYSTGVGRTPVLELRNITALARKYAAPGKGARIFIKDEAGNPSGSFKARRAANAVYHAKKLGYKGVIAATSGNYGAAVASQAAMAGLKCIIVQECYDSKGVGQPEIIEKARKCEALGAEVVQLSVGPELFYKFLSLLEETGYFNASLYTPFGIAGVETLGYELAVEFREAYGKDPDVVVCSNAGGGNLTGTARGLIKAGAQSEVVAASVNLQGLHMASDTQFNKKSFTTSHTGFGMPFATWPDRSDVPRSAARPLRYMDRYVTVNQGEVFYITETLASLEGLEKGPAGNTALAAAFSLAQEMDKDQIIVVQETEYTGAGKHIQPQLAFARDNGIDIKFGNPKEEVAGINIILPENPGMIKAVDHEMNKLRKSLIKNALANYPDAKLDDSDIDFLVKETKSDTEFVKATIKEIKG</sequence>
<comment type="function">
    <text evidence="3">Involved in the ornithine fermentation pathway. Catalyzes the thiolytic cleavage of 2-amino-4-ketopentanoate (AKP) with coenzyme A (CoA) to form acetyl-CoA and alanine. It is strictly specific for AKP.</text>
</comment>
<comment type="catalytic activity">
    <reaction evidence="3">
        <text>D-alanine + acetyl-CoA = (2R)-2-amino-4-oxopentanoate + CoA</text>
        <dbReference type="Rhea" id="RHEA:51436"/>
        <dbReference type="ChEBI" id="CHEBI:57287"/>
        <dbReference type="ChEBI" id="CHEBI:57288"/>
        <dbReference type="ChEBI" id="CHEBI:57416"/>
        <dbReference type="ChEBI" id="CHEBI:134102"/>
        <dbReference type="EC" id="2.3.1.263"/>
    </reaction>
</comment>
<comment type="cofactor">
    <cofactor evidence="3">
        <name>pyridoxal 5'-phosphate</name>
        <dbReference type="ChEBI" id="CHEBI:597326"/>
    </cofactor>
</comment>
<comment type="activity regulation">
    <text evidence="3">Completely inhibited by p-chloromercuribenzoate (p-ClHgBzO) and acetyl-CoA, and partially inhibited by N-ethylmaleimide.</text>
</comment>
<comment type="subunit">
    <text evidence="1">Heterodimer with OrtA.</text>
</comment>
<comment type="similarity">
    <text evidence="5">Belongs to the threonine synthase family.</text>
</comment>
<evidence type="ECO:0000250" key="1">
    <source>
        <dbReference type="UniProtKB" id="C1FW07"/>
    </source>
</evidence>
<evidence type="ECO:0000250" key="2">
    <source>
        <dbReference type="UniProtKB" id="P9WG59"/>
    </source>
</evidence>
<evidence type="ECO:0000269" key="3">
    <source>
    </source>
</evidence>
<evidence type="ECO:0000303" key="4">
    <source>
    </source>
</evidence>
<evidence type="ECO:0000305" key="5"/>
<evidence type="ECO:0000312" key="6">
    <source>
        <dbReference type="EMBL" id="CBH21412.1"/>
    </source>
</evidence>
<protein>
    <recommendedName>
        <fullName evidence="4">2-amino-4-ketopentanoate thiolase beta subunit</fullName>
        <ecNumber evidence="3">2.3.1.263</ecNumber>
    </recommendedName>
    <alternativeName>
        <fullName evidence="4">AKP thiolase</fullName>
        <shortName evidence="4">AKPT</shortName>
    </alternativeName>
</protein>
<organism>
    <name type="scientific">Acetoanaerobium sticklandii (strain ATCC 12662 / DSM 519 / JCM 1433 / CCUG 9281 / NCIMB 10654 / HF)</name>
    <name type="common">Clostridium sticklandii</name>
    <dbReference type="NCBI Taxonomy" id="499177"/>
    <lineage>
        <taxon>Bacteria</taxon>
        <taxon>Bacillati</taxon>
        <taxon>Bacillota</taxon>
        <taxon>Clostridia</taxon>
        <taxon>Peptostreptococcales</taxon>
        <taxon>Filifactoraceae</taxon>
        <taxon>Acetoanaerobium</taxon>
    </lineage>
</organism>
<name>ORTB_ACESD</name>
<accession>E3PY97</accession>
<keyword id="KW-0663">Pyridoxal phosphate</keyword>
<keyword id="KW-1185">Reference proteome</keyword>
<keyword id="KW-0808">Transferase</keyword>
<reference key="1">
    <citation type="journal article" date="2010" name="BMC Genomics">
        <title>Clostridium sticklandii, a specialist in amino acid degradation:revisiting its metabolism through its genome sequence.</title>
        <authorList>
            <person name="Fonknechten N."/>
            <person name="Chaussonnerie S."/>
            <person name="Tricot S."/>
            <person name="Lajus A."/>
            <person name="Andreesen J.R."/>
            <person name="Perchat N."/>
            <person name="Pelletier E."/>
            <person name="Gouyvenoux M."/>
            <person name="Barbe V."/>
            <person name="Salanoubat M."/>
            <person name="Le Paslier D."/>
            <person name="Weissenbach J."/>
            <person name="Cohen G.N."/>
            <person name="Kreimeyer A."/>
        </authorList>
    </citation>
    <scope>NUCLEOTIDE SEQUENCE [LARGE SCALE GENOMIC DNA]</scope>
    <source>
        <strain>ATCC 12662 / DSM 519 / JCM 1433 / CCUG 9281 / NCIMB 10654 / HF</strain>
    </source>
</reference>
<reference key="2">
    <citation type="journal article" date="1974" name="Biochemistry">
        <title>Ornithine degradation in Clostridium sticklandii; pyridoxal phosphate and coenzyme A dependent thiolytic cleavage of 2-amino-4-ketopentanoate to alanine and acetyl coenzyme A.</title>
        <authorList>
            <person name="Jeng I.M."/>
            <person name="Somack R."/>
            <person name="Barker H.A."/>
        </authorList>
    </citation>
    <scope>FUNCTION</scope>
    <scope>CATALYTIC ACTIVITY</scope>
    <scope>ACTIVITY REGULATION</scope>
    <scope>COFACTOR</scope>
    <source>
        <strain>ATCC 12662 / DSM 519 / JCM 1433 / CCUG 9281 / NCIMB 10654 / HF</strain>
    </source>
</reference>
<gene>
    <name evidence="1" type="primary">ortB</name>
    <name evidence="6" type="ordered locus">CLOST_1292</name>
</gene>
<proteinExistence type="evidence at protein level"/>